<reference key="1">
    <citation type="journal article" date="2004" name="J. Mol. Microbiol. Biotechnol.">
        <title>The complete genome sequence of Bacillus licheniformis DSM13, an organism with great industrial potential.</title>
        <authorList>
            <person name="Veith B."/>
            <person name="Herzberg C."/>
            <person name="Steckel S."/>
            <person name="Feesche J."/>
            <person name="Maurer K.H."/>
            <person name="Ehrenreich P."/>
            <person name="Baeumer S."/>
            <person name="Henne A."/>
            <person name="Liesegang H."/>
            <person name="Merkl R."/>
            <person name="Ehrenreich A."/>
            <person name="Gottschalk G."/>
        </authorList>
    </citation>
    <scope>NUCLEOTIDE SEQUENCE [LARGE SCALE GENOMIC DNA]</scope>
    <source>
        <strain>ATCC 14580 / DSM 13 / JCM 2505 / CCUG 7422 / NBRC 12200 / NCIMB 9375 / NCTC 10341 / NRRL NRS-1264 / Gibson 46</strain>
    </source>
</reference>
<reference key="2">
    <citation type="journal article" date="2004" name="Genome Biol.">
        <title>Complete genome sequence of the industrial bacterium Bacillus licheniformis and comparisons with closely related Bacillus species.</title>
        <authorList>
            <person name="Rey M.W."/>
            <person name="Ramaiya P."/>
            <person name="Nelson B.A."/>
            <person name="Brody-Karpin S.D."/>
            <person name="Zaretsky E.J."/>
            <person name="Tang M."/>
            <person name="Lopez de Leon A."/>
            <person name="Xiang H."/>
            <person name="Gusti V."/>
            <person name="Clausen I.G."/>
            <person name="Olsen P.B."/>
            <person name="Rasmussen M.D."/>
            <person name="Andersen J.T."/>
            <person name="Joergensen P.L."/>
            <person name="Larsen T.S."/>
            <person name="Sorokin A."/>
            <person name="Bolotin A."/>
            <person name="Lapidus A."/>
            <person name="Galleron N."/>
            <person name="Ehrlich S.D."/>
            <person name="Berka R.M."/>
        </authorList>
    </citation>
    <scope>NUCLEOTIDE SEQUENCE [LARGE SCALE GENOMIC DNA]</scope>
    <source>
        <strain>ATCC 14580 / DSM 13 / JCM 2505 / CCUG 7422 / NBRC 12200 / NCIMB 9375 / NCTC 10341 / NRRL NRS-1264 / Gibson 46</strain>
    </source>
</reference>
<sequence>MKLKDFPDEERPRERLLNTGAESLSNHELLAILLRTGTKKESVLQLSSRLLQTFDGLRLLKEASAEELSSISGIGRAKAVQILAALELGRRIHSLACKDRYVIRFPEDAANFLMGDMRFLSQEHFVCVYLNTKNQVIHKRTVFIGSLNSSIVHPREVFKEALKRSAASFICVHNHPSGDPAPSREDIEVTQRLHESGQLLGIELLDHIIIGDQKFVSLKEKGYL</sequence>
<name>Y2933_BACLD</name>
<protein>
    <recommendedName>
        <fullName>UPF0758 protein BLi02933/BL00636</fullName>
    </recommendedName>
</protein>
<keyword id="KW-0378">Hydrolase</keyword>
<keyword id="KW-0479">Metal-binding</keyword>
<keyword id="KW-0482">Metalloprotease</keyword>
<keyword id="KW-0645">Protease</keyword>
<keyword id="KW-1185">Reference proteome</keyword>
<keyword id="KW-0862">Zinc</keyword>
<accession>Q65GL3</accession>
<accession>Q62S21</accession>
<evidence type="ECO:0000255" key="1">
    <source>
        <dbReference type="PROSITE-ProRule" id="PRU01182"/>
    </source>
</evidence>
<evidence type="ECO:0000305" key="2"/>
<feature type="chain" id="PRO_0000322666" description="UPF0758 protein BLi02933/BL00636">
    <location>
        <begin position="1"/>
        <end position="224"/>
    </location>
</feature>
<feature type="domain" description="MPN" evidence="1">
    <location>
        <begin position="102"/>
        <end position="224"/>
    </location>
</feature>
<feature type="short sequence motif" description="JAMM motif" evidence="1">
    <location>
        <begin position="173"/>
        <end position="186"/>
    </location>
</feature>
<feature type="binding site" evidence="1">
    <location>
        <position position="173"/>
    </location>
    <ligand>
        <name>Zn(2+)</name>
        <dbReference type="ChEBI" id="CHEBI:29105"/>
        <note>catalytic</note>
    </ligand>
</feature>
<feature type="binding site" evidence="1">
    <location>
        <position position="175"/>
    </location>
    <ligand>
        <name>Zn(2+)</name>
        <dbReference type="ChEBI" id="CHEBI:29105"/>
        <note>catalytic</note>
    </ligand>
</feature>
<feature type="binding site" evidence="1">
    <location>
        <position position="186"/>
    </location>
    <ligand>
        <name>Zn(2+)</name>
        <dbReference type="ChEBI" id="CHEBI:29105"/>
        <note>catalytic</note>
    </ligand>
</feature>
<dbReference type="EMBL" id="CP000002">
    <property type="protein sequence ID" value="AAU24439.1"/>
    <property type="molecule type" value="Genomic_DNA"/>
</dbReference>
<dbReference type="EMBL" id="AE017333">
    <property type="protein sequence ID" value="AAU41801.1"/>
    <property type="molecule type" value="Genomic_DNA"/>
</dbReference>
<dbReference type="SMR" id="Q65GL3"/>
<dbReference type="STRING" id="279010.BL00636"/>
<dbReference type="KEGG" id="bld:BLi02933"/>
<dbReference type="KEGG" id="bli:BL00636"/>
<dbReference type="eggNOG" id="COG2003">
    <property type="taxonomic scope" value="Bacteria"/>
</dbReference>
<dbReference type="HOGENOM" id="CLU_073529_0_2_9"/>
<dbReference type="Proteomes" id="UP000000606">
    <property type="component" value="Chromosome"/>
</dbReference>
<dbReference type="GO" id="GO:0046872">
    <property type="term" value="F:metal ion binding"/>
    <property type="evidence" value="ECO:0007669"/>
    <property type="project" value="UniProtKB-KW"/>
</dbReference>
<dbReference type="GO" id="GO:0008237">
    <property type="term" value="F:metallopeptidase activity"/>
    <property type="evidence" value="ECO:0007669"/>
    <property type="project" value="UniProtKB-KW"/>
</dbReference>
<dbReference type="GO" id="GO:0006508">
    <property type="term" value="P:proteolysis"/>
    <property type="evidence" value="ECO:0007669"/>
    <property type="project" value="UniProtKB-KW"/>
</dbReference>
<dbReference type="CDD" id="cd08071">
    <property type="entry name" value="MPN_DUF2466"/>
    <property type="match status" value="1"/>
</dbReference>
<dbReference type="Gene3D" id="1.10.150.20">
    <property type="entry name" value="5' to 3' exonuclease, C-terminal subdomain"/>
    <property type="match status" value="1"/>
</dbReference>
<dbReference type="Gene3D" id="3.40.140.10">
    <property type="entry name" value="Cytidine Deaminase, domain 2"/>
    <property type="match status" value="1"/>
</dbReference>
<dbReference type="InterPro" id="IPR037518">
    <property type="entry name" value="MPN"/>
</dbReference>
<dbReference type="InterPro" id="IPR025657">
    <property type="entry name" value="RadC_JAB"/>
</dbReference>
<dbReference type="InterPro" id="IPR010994">
    <property type="entry name" value="RuvA_2-like"/>
</dbReference>
<dbReference type="InterPro" id="IPR001405">
    <property type="entry name" value="UPF0758"/>
</dbReference>
<dbReference type="InterPro" id="IPR020891">
    <property type="entry name" value="UPF0758_CS"/>
</dbReference>
<dbReference type="InterPro" id="IPR046778">
    <property type="entry name" value="UPF0758_N"/>
</dbReference>
<dbReference type="NCBIfam" id="NF000642">
    <property type="entry name" value="PRK00024.1"/>
    <property type="match status" value="1"/>
</dbReference>
<dbReference type="NCBIfam" id="TIGR00608">
    <property type="entry name" value="radc"/>
    <property type="match status" value="1"/>
</dbReference>
<dbReference type="PANTHER" id="PTHR30471">
    <property type="entry name" value="DNA REPAIR PROTEIN RADC"/>
    <property type="match status" value="1"/>
</dbReference>
<dbReference type="PANTHER" id="PTHR30471:SF3">
    <property type="entry name" value="UPF0758 PROTEIN YEES-RELATED"/>
    <property type="match status" value="1"/>
</dbReference>
<dbReference type="Pfam" id="PF04002">
    <property type="entry name" value="RadC"/>
    <property type="match status" value="1"/>
</dbReference>
<dbReference type="Pfam" id="PF20582">
    <property type="entry name" value="UPF0758_N"/>
    <property type="match status" value="1"/>
</dbReference>
<dbReference type="SUPFAM" id="SSF102712">
    <property type="entry name" value="JAB1/MPN domain"/>
    <property type="match status" value="1"/>
</dbReference>
<dbReference type="SUPFAM" id="SSF47781">
    <property type="entry name" value="RuvA domain 2-like"/>
    <property type="match status" value="1"/>
</dbReference>
<dbReference type="PROSITE" id="PS50249">
    <property type="entry name" value="MPN"/>
    <property type="match status" value="1"/>
</dbReference>
<dbReference type="PROSITE" id="PS01302">
    <property type="entry name" value="UPF0758"/>
    <property type="match status" value="1"/>
</dbReference>
<gene>
    <name type="ordered locus">BLi02933</name>
    <name type="ordered locus">BL00636</name>
</gene>
<comment type="similarity">
    <text evidence="2">Belongs to the UPF0758 family.</text>
</comment>
<proteinExistence type="inferred from homology"/>
<organism>
    <name type="scientific">Bacillus licheniformis (strain ATCC 14580 / DSM 13 / JCM 2505 / CCUG 7422 / NBRC 12200 / NCIMB 9375 / NCTC 10341 / NRRL NRS-1264 / Gibson 46)</name>
    <dbReference type="NCBI Taxonomy" id="279010"/>
    <lineage>
        <taxon>Bacteria</taxon>
        <taxon>Bacillati</taxon>
        <taxon>Bacillota</taxon>
        <taxon>Bacilli</taxon>
        <taxon>Bacillales</taxon>
        <taxon>Bacillaceae</taxon>
        <taxon>Bacillus</taxon>
    </lineage>
</organism>